<evidence type="ECO:0000255" key="1">
    <source>
        <dbReference type="HAMAP-Rule" id="MF_00129"/>
    </source>
</evidence>
<keyword id="KW-0963">Cytoplasm</keyword>
<keyword id="KW-0274">FAD</keyword>
<keyword id="KW-0285">Flavoprotein</keyword>
<keyword id="KW-0520">NAD</keyword>
<keyword id="KW-0819">tRNA processing</keyword>
<feature type="chain" id="PRO_0000117190" description="tRNA uridine 5-carboxymethylaminomethyl modification enzyme MnmG">
    <location>
        <begin position="1"/>
        <end position="632"/>
    </location>
</feature>
<feature type="binding site" evidence="1">
    <location>
        <begin position="15"/>
        <end position="20"/>
    </location>
    <ligand>
        <name>FAD</name>
        <dbReference type="ChEBI" id="CHEBI:57692"/>
    </ligand>
</feature>
<feature type="binding site" evidence="1">
    <location>
        <position position="127"/>
    </location>
    <ligand>
        <name>FAD</name>
        <dbReference type="ChEBI" id="CHEBI:57692"/>
    </ligand>
</feature>
<feature type="binding site" evidence="1">
    <location>
        <position position="182"/>
    </location>
    <ligand>
        <name>FAD</name>
        <dbReference type="ChEBI" id="CHEBI:57692"/>
    </ligand>
</feature>
<feature type="binding site" evidence="1">
    <location>
        <begin position="276"/>
        <end position="290"/>
    </location>
    <ligand>
        <name>NAD(+)</name>
        <dbReference type="ChEBI" id="CHEBI:57540"/>
    </ligand>
</feature>
<feature type="binding site" evidence="1">
    <location>
        <position position="373"/>
    </location>
    <ligand>
        <name>FAD</name>
        <dbReference type="ChEBI" id="CHEBI:57692"/>
    </ligand>
</feature>
<sequence length="632" mass="70157">MTHEFTESYDVIVIGAGHAGVEASLATSRMGCKTLLATINLDMLAFMPCNPSIGGSAKGIVVREIDALGGEMSKNIDKTYIQMKMLNTGKGPAVRALRAQADKSLYAREMKHTVEKQANLTLRQTMIDDILVEDGRVVGVLTATGQKFAAKAVVVTTGTALRGEIILGELKYSSGPNNSLASVTLADNLKKLGLEIGRFKTGTPPRVKASSINYDQTEIQPGDDKPNHFSFMSKDADYLKDQIPCWLTYTNQTSHDIINQNLYRAPMFSGIVKGVGPRYCPSIEDKIVRFADKERHQLFLEPEGRDTEEVYVQGLSTSLPEDVQKDLIHSIKGLEKAEMMRTGYAIEYDIVLPHQLRATLETKLISGLFTAGQTNGTSGYEEAAGQGLIAGINAALKVQGKPELILKRSDAYIGVMIDDLVTKGTLEPYRLLTSRAEYRLILRHDNADMRLTEIGRDIGLVDDERWKAFEIKKNQFDNELKRLNSIKLKPVKATNDRVQELGFKPLTDAMTAKEFMRRPEIDYATAVSFVGPAAEDLDAKIIELLETEIKYEGYIRKALDQVAKMKRMEEKRIPANIDWDAIDSIATEARQKFKKINPETIGQASRISGVNPADISILMIYLEGNGKAHRKY</sequence>
<name>MNMG_STRP8</name>
<comment type="function">
    <text evidence="1">NAD-binding protein involved in the addition of a carboxymethylaminomethyl (cmnm) group at the wobble position (U34) of certain tRNAs, forming tRNA-cmnm(5)s(2)U34.</text>
</comment>
<comment type="cofactor">
    <cofactor evidence="1">
        <name>FAD</name>
        <dbReference type="ChEBI" id="CHEBI:57692"/>
    </cofactor>
</comment>
<comment type="subunit">
    <text evidence="1">Homodimer. Heterotetramer of two MnmE and two MnmG subunits.</text>
</comment>
<comment type="subcellular location">
    <subcellularLocation>
        <location evidence="1">Cytoplasm</location>
    </subcellularLocation>
</comment>
<comment type="similarity">
    <text evidence="1">Belongs to the MnmG family.</text>
</comment>
<reference key="1">
    <citation type="journal article" date="2002" name="Proc. Natl. Acad. Sci. U.S.A.">
        <title>Genome sequence and comparative microarray analysis of serotype M18 group A Streptococcus strains associated with acute rheumatic fever outbreaks.</title>
        <authorList>
            <person name="Smoot J.C."/>
            <person name="Barbian K.D."/>
            <person name="Van Gompel J.J."/>
            <person name="Smoot L.M."/>
            <person name="Chaussee M.S."/>
            <person name="Sylva G.L."/>
            <person name="Sturdevant D.E."/>
            <person name="Ricklefs S.M."/>
            <person name="Porcella S.F."/>
            <person name="Parkins L.D."/>
            <person name="Beres S.B."/>
            <person name="Campbell D.S."/>
            <person name="Smith T.M."/>
            <person name="Zhang Q."/>
            <person name="Kapur V."/>
            <person name="Daly J.A."/>
            <person name="Veasy L.G."/>
            <person name="Musser J.M."/>
        </authorList>
    </citation>
    <scope>NUCLEOTIDE SEQUENCE [LARGE SCALE GENOMIC DNA]</scope>
    <source>
        <strain>MGAS8232</strain>
    </source>
</reference>
<dbReference type="EMBL" id="AE009949">
    <property type="protein sequence ID" value="AAL98654.1"/>
    <property type="molecule type" value="Genomic_DNA"/>
</dbReference>
<dbReference type="RefSeq" id="WP_011018334.1">
    <property type="nucleotide sequence ID" value="NC_003485.1"/>
</dbReference>
<dbReference type="SMR" id="Q8NZ02"/>
<dbReference type="KEGG" id="spm:spyM18_2220"/>
<dbReference type="HOGENOM" id="CLU_007831_2_2_9"/>
<dbReference type="GO" id="GO:0005829">
    <property type="term" value="C:cytosol"/>
    <property type="evidence" value="ECO:0007669"/>
    <property type="project" value="TreeGrafter"/>
</dbReference>
<dbReference type="GO" id="GO:0050660">
    <property type="term" value="F:flavin adenine dinucleotide binding"/>
    <property type="evidence" value="ECO:0007669"/>
    <property type="project" value="UniProtKB-UniRule"/>
</dbReference>
<dbReference type="GO" id="GO:0030488">
    <property type="term" value="P:tRNA methylation"/>
    <property type="evidence" value="ECO:0007669"/>
    <property type="project" value="TreeGrafter"/>
</dbReference>
<dbReference type="GO" id="GO:0002098">
    <property type="term" value="P:tRNA wobble uridine modification"/>
    <property type="evidence" value="ECO:0007669"/>
    <property type="project" value="InterPro"/>
</dbReference>
<dbReference type="FunFam" id="1.10.10.1800:FF:000001">
    <property type="entry name" value="tRNA uridine 5-carboxymethylaminomethyl modification enzyme MnmG"/>
    <property type="match status" value="1"/>
</dbReference>
<dbReference type="FunFam" id="1.10.150.570:FF:000001">
    <property type="entry name" value="tRNA uridine 5-carboxymethylaminomethyl modification enzyme MnmG"/>
    <property type="match status" value="1"/>
</dbReference>
<dbReference type="FunFam" id="3.50.50.60:FF:000002">
    <property type="entry name" value="tRNA uridine 5-carboxymethylaminomethyl modification enzyme MnmG"/>
    <property type="match status" value="1"/>
</dbReference>
<dbReference type="FunFam" id="3.50.50.60:FF:000063">
    <property type="entry name" value="tRNA uridine 5-carboxymethylaminomethyl modification enzyme MnmG"/>
    <property type="match status" value="1"/>
</dbReference>
<dbReference type="Gene3D" id="3.50.50.60">
    <property type="entry name" value="FAD/NAD(P)-binding domain"/>
    <property type="match status" value="2"/>
</dbReference>
<dbReference type="Gene3D" id="1.10.150.570">
    <property type="entry name" value="GidA associated domain, C-terminal subdomain"/>
    <property type="match status" value="1"/>
</dbReference>
<dbReference type="Gene3D" id="1.10.10.1800">
    <property type="entry name" value="tRNA uridine 5-carboxymethylaminomethyl modification enzyme MnmG/GidA"/>
    <property type="match status" value="1"/>
</dbReference>
<dbReference type="HAMAP" id="MF_00129">
    <property type="entry name" value="MnmG_GidA"/>
    <property type="match status" value="1"/>
</dbReference>
<dbReference type="InterPro" id="IPR036188">
    <property type="entry name" value="FAD/NAD-bd_sf"/>
</dbReference>
<dbReference type="InterPro" id="IPR049312">
    <property type="entry name" value="GIDA_C_N"/>
</dbReference>
<dbReference type="InterPro" id="IPR004416">
    <property type="entry name" value="MnmG"/>
</dbReference>
<dbReference type="InterPro" id="IPR002218">
    <property type="entry name" value="MnmG-rel"/>
</dbReference>
<dbReference type="InterPro" id="IPR020595">
    <property type="entry name" value="MnmG-rel_CS"/>
</dbReference>
<dbReference type="InterPro" id="IPR026904">
    <property type="entry name" value="MnmG_C"/>
</dbReference>
<dbReference type="InterPro" id="IPR047001">
    <property type="entry name" value="MnmG_C_subdom"/>
</dbReference>
<dbReference type="InterPro" id="IPR044920">
    <property type="entry name" value="MnmG_C_subdom_sf"/>
</dbReference>
<dbReference type="InterPro" id="IPR040131">
    <property type="entry name" value="MnmG_N"/>
</dbReference>
<dbReference type="NCBIfam" id="TIGR00136">
    <property type="entry name" value="mnmG_gidA"/>
    <property type="match status" value="1"/>
</dbReference>
<dbReference type="PANTHER" id="PTHR11806">
    <property type="entry name" value="GLUCOSE INHIBITED DIVISION PROTEIN A"/>
    <property type="match status" value="1"/>
</dbReference>
<dbReference type="PANTHER" id="PTHR11806:SF0">
    <property type="entry name" value="PROTEIN MTO1 HOMOLOG, MITOCHONDRIAL"/>
    <property type="match status" value="1"/>
</dbReference>
<dbReference type="Pfam" id="PF01134">
    <property type="entry name" value="GIDA"/>
    <property type="match status" value="1"/>
</dbReference>
<dbReference type="Pfam" id="PF21680">
    <property type="entry name" value="GIDA_C_1st"/>
    <property type="match status" value="1"/>
</dbReference>
<dbReference type="Pfam" id="PF13932">
    <property type="entry name" value="SAM_GIDA_C"/>
    <property type="match status" value="1"/>
</dbReference>
<dbReference type="PRINTS" id="PR00411">
    <property type="entry name" value="PNDRDTASEI"/>
</dbReference>
<dbReference type="SMART" id="SM01228">
    <property type="entry name" value="GIDA_assoc_3"/>
    <property type="match status" value="1"/>
</dbReference>
<dbReference type="SUPFAM" id="SSF51905">
    <property type="entry name" value="FAD/NAD(P)-binding domain"/>
    <property type="match status" value="1"/>
</dbReference>
<dbReference type="PROSITE" id="PS01280">
    <property type="entry name" value="GIDA_1"/>
    <property type="match status" value="1"/>
</dbReference>
<dbReference type="PROSITE" id="PS01281">
    <property type="entry name" value="GIDA_2"/>
    <property type="match status" value="1"/>
</dbReference>
<protein>
    <recommendedName>
        <fullName evidence="1">tRNA uridine 5-carboxymethylaminomethyl modification enzyme MnmG</fullName>
    </recommendedName>
    <alternativeName>
        <fullName evidence="1">Glucose-inhibited division protein A</fullName>
    </alternativeName>
</protein>
<proteinExistence type="inferred from homology"/>
<accession>Q8NZ02</accession>
<gene>
    <name evidence="1" type="primary">mnmG</name>
    <name evidence="1" type="synonym">gidA</name>
    <name type="ordered locus">spyM18_2220</name>
</gene>
<organism>
    <name type="scientific">Streptococcus pyogenes serotype M18 (strain MGAS8232)</name>
    <dbReference type="NCBI Taxonomy" id="186103"/>
    <lineage>
        <taxon>Bacteria</taxon>
        <taxon>Bacillati</taxon>
        <taxon>Bacillota</taxon>
        <taxon>Bacilli</taxon>
        <taxon>Lactobacillales</taxon>
        <taxon>Streptococcaceae</taxon>
        <taxon>Streptococcus</taxon>
    </lineage>
</organism>